<organismHost>
    <name type="scientific">Homo sapiens</name>
    <name type="common">Human</name>
    <dbReference type="NCBI Taxonomy" id="9606"/>
</organismHost>
<evidence type="ECO:0000250" key="1"/>
<evidence type="ECO:0000256" key="2">
    <source>
        <dbReference type="SAM" id="MobiDB-lite"/>
    </source>
</evidence>
<evidence type="ECO:0000305" key="3"/>
<organism>
    <name type="scientific">Torque teno virus (isolate Human/Japan/SANBAN/1999)</name>
    <name type="common">TTV</name>
    <dbReference type="NCBI Taxonomy" id="486277"/>
    <lineage>
        <taxon>Viruses</taxon>
        <taxon>Viruses incertae sedis</taxon>
        <taxon>Anelloviridae</taxon>
        <taxon>Torque teno virus</taxon>
    </lineage>
</organism>
<comment type="function">
    <text evidence="1">Self assemble to form an icosahedral capsid.</text>
</comment>
<comment type="subcellular location">
    <subcellularLocation>
        <location evidence="3">Virion</location>
    </subcellularLocation>
</comment>
<comment type="similarity">
    <text evidence="3">Belongs to the anelloviridae capsid protein family.</text>
</comment>
<sequence>MAWGWWRRWRRWPARRWRRRRRRRPLRRRRAGRPARRYRRRRTVRTRRRRWGRRRYRRGWRRRTYVRKGRHRKKKKRLILRQWQPATRRRCTITGYLPIVFCGHTKGNKNYALHSDDYTPQGQPFGGALSTTSFSLKVLFDQHQRGLNKWSFPNDQLDLARYRGCKFIFYRTKQTDWIGQYDISEPYKLDKYSCPNYHPGNLIKAKHKFLIPSYDTNPRGRQKIIVKIPPPDLFVDKWYTQEDLCSVNLVSLAVSAASFLHPFGSPQTDNPCYTFQVLKEFYYQAIGFSATDESRNYVFNVLYEENSYWESNITPFYVINVKKGSNTXDYMSPXISDSHFRNKVNTNYNWYTYNAKSHKNDLHXLRRAYFKQLTTEGPQQTSSEKGYASQWTTPTTDAYEYHLGMFSTIFLAPDRPVPRFPCAYQDVTYNPLMDKGVGNHVWFQYNTKADTQLIVTGGSCKAHIEDIPLWAAFYGYSDFIESELGPFVDAETVGLICVICPYTKPPMYNKTNPMMGYVFYDRNFGDGKWIDGRGKIEPYWQVRWRPEMLFQETVMADIVQTGPFSYKDELKNSTLVAKYKFYFTWGGNMMFQQTIKNPCKTDGRPTDSDRHPRGIQVADPEQMGPRWVFHSFDWRRGYLSEGAIKRLHEKPLDYESYFTQPKRPRIFPPTEAAEGEFREPEKGSYSEEERSQASAEEQATEETVLLLKRRLREQRKLEQQLQFLTREMFKTQAGLHINPMLLSQR</sequence>
<reference key="1">
    <citation type="journal article" date="1999" name="Virology">
        <title>Complete circular DNA genome of a TT virus variant (isolate name SANBAN) and 44 partial ORF2 sequences implicating a great degree of diversity beyond genotypes.</title>
        <authorList>
            <person name="Hijikata M."/>
            <person name="Takahashi K."/>
            <person name="Mishiro S."/>
        </authorList>
    </citation>
    <scope>NUCLEOTIDE SEQUENCE [GENOMIC DNA]</scope>
</reference>
<reference key="2">
    <citation type="journal article" date="2007" name="Rev. Med. Virol.">
        <title>Torque teno virus (TTV): current status.</title>
        <authorList>
            <person name="Hino S."/>
            <person name="Miyata H."/>
        </authorList>
    </citation>
    <scope>REVIEW</scope>
</reference>
<gene>
    <name type="ORF">ORF1</name>
</gene>
<name>CAPSD_TTVV5</name>
<accession>Q9WSV7</accession>
<feature type="chain" id="PRO_0000315330" description="Capsid protein">
    <location>
        <begin position="1"/>
        <end position="745"/>
    </location>
</feature>
<feature type="region of interest" description="Disordered" evidence="2">
    <location>
        <begin position="23"/>
        <end position="44"/>
    </location>
</feature>
<feature type="region of interest" description="Disordered" evidence="2">
    <location>
        <begin position="598"/>
        <end position="619"/>
    </location>
</feature>
<feature type="region of interest" description="Disordered" evidence="2">
    <location>
        <begin position="660"/>
        <end position="700"/>
    </location>
</feature>
<feature type="compositionally biased region" description="Basic and acidic residues" evidence="2">
    <location>
        <begin position="599"/>
        <end position="612"/>
    </location>
</feature>
<feature type="compositionally biased region" description="Basic and acidic residues" evidence="2">
    <location>
        <begin position="675"/>
        <end position="691"/>
    </location>
</feature>
<keyword id="KW-0167">Capsid protein</keyword>
<keyword id="KW-1185">Reference proteome</keyword>
<keyword id="KW-1140">T=1 icosahedral capsid protein</keyword>
<keyword id="KW-0946">Virion</keyword>
<dbReference type="EMBL" id="AB025946">
    <property type="protein sequence ID" value="BAA82149.2"/>
    <property type="molecule type" value="Genomic_DNA"/>
</dbReference>
<dbReference type="RefSeq" id="YP_003587857.1">
    <property type="nucleotide sequence ID" value="NC_014078.1"/>
</dbReference>
<dbReference type="KEGG" id="vg:9086617"/>
<dbReference type="Proteomes" id="UP000008259">
    <property type="component" value="Segment"/>
</dbReference>
<dbReference type="GO" id="GO:0039615">
    <property type="term" value="C:T=1 icosahedral viral capsid"/>
    <property type="evidence" value="ECO:0007669"/>
    <property type="project" value="UniProtKB-KW"/>
</dbReference>
<dbReference type="CDD" id="cd22249">
    <property type="entry name" value="UDM1_RNF168_RNF169-like"/>
    <property type="match status" value="1"/>
</dbReference>
<dbReference type="InterPro" id="IPR004219">
    <property type="entry name" value="TTvirus_Unk"/>
</dbReference>
<dbReference type="Pfam" id="PF02956">
    <property type="entry name" value="TT_ORF1"/>
    <property type="match status" value="1"/>
</dbReference>
<protein>
    <recommendedName>
        <fullName>Capsid protein</fullName>
    </recommendedName>
</protein>
<proteinExistence type="inferred from homology"/>